<proteinExistence type="inferred from homology"/>
<feature type="chain" id="PRO_0000198967" description="Nucleoid occlusion factor SlmA">
    <location>
        <begin position="1"/>
        <end position="198"/>
    </location>
</feature>
<feature type="domain" description="HTH tetR-type" evidence="1">
    <location>
        <begin position="10"/>
        <end position="70"/>
    </location>
</feature>
<feature type="DNA-binding region" description="H-T-H motif" evidence="1">
    <location>
        <begin position="33"/>
        <end position="52"/>
    </location>
</feature>
<feature type="coiled-coil region" evidence="1">
    <location>
        <begin position="117"/>
        <end position="144"/>
    </location>
</feature>
<comment type="function">
    <text evidence="1">Required for nucleoid occlusion (NO) phenomenon, which prevents Z-ring formation and cell division over the nucleoid. Acts as a DNA-associated cell division inhibitor that binds simultaneously chromosomal DNA and FtsZ, and disrupts the assembly of FtsZ polymers. SlmA-DNA-binding sequences (SBS) are dispersed on non-Ter regions of the chromosome, preventing FtsZ polymerization at these regions.</text>
</comment>
<comment type="subunit">
    <text evidence="1">Homodimer. Interacts with FtsZ.</text>
</comment>
<comment type="subcellular location">
    <subcellularLocation>
        <location evidence="1">Cytoplasm</location>
        <location evidence="1">Nucleoid</location>
    </subcellularLocation>
</comment>
<comment type="similarity">
    <text evidence="1">Belongs to the nucleoid occlusion factor SlmA family.</text>
</comment>
<comment type="sequence caution" evidence="2">
    <conflict type="erroneous initiation">
        <sequence resource="EMBL-CDS" id="AAG58785"/>
    </conflict>
</comment>
<comment type="sequence caution" evidence="2">
    <conflict type="erroneous initiation">
        <sequence resource="EMBL-CDS" id="BAB37939"/>
    </conflict>
</comment>
<sequence length="198" mass="22836">MAEKQTAKRNRREEILQSLALMLESSDGSQRITTAKLAASVGVSEAALYRHFPSKTRMFDSLIEFIEDSLITRINLILKDEKDTTARLRLIVLLLLGFGERNPGLTRILTGHALMFEQDRLQGRINQLFERIEAQLRQVLREKRMREGEGYTTDETLLASQILAFCEGMLSRFVRSEFKYRPTDDFDARWPLIAAQLQ</sequence>
<organism>
    <name type="scientific">Escherichia coli O157:H7</name>
    <dbReference type="NCBI Taxonomy" id="83334"/>
    <lineage>
        <taxon>Bacteria</taxon>
        <taxon>Pseudomonadati</taxon>
        <taxon>Pseudomonadota</taxon>
        <taxon>Gammaproteobacteria</taxon>
        <taxon>Enterobacterales</taxon>
        <taxon>Enterobacteriaceae</taxon>
        <taxon>Escherichia</taxon>
    </lineage>
</organism>
<accession>Q8X580</accession>
<accession>Q7A9T2</accession>
<evidence type="ECO:0000255" key="1">
    <source>
        <dbReference type="HAMAP-Rule" id="MF_01839"/>
    </source>
</evidence>
<evidence type="ECO:0000305" key="2"/>
<keyword id="KW-0131">Cell cycle</keyword>
<keyword id="KW-0132">Cell division</keyword>
<keyword id="KW-0175">Coiled coil</keyword>
<keyword id="KW-0963">Cytoplasm</keyword>
<keyword id="KW-0238">DNA-binding</keyword>
<keyword id="KW-1185">Reference proteome</keyword>
<dbReference type="EMBL" id="AE005174">
    <property type="protein sequence ID" value="AAG58785.1"/>
    <property type="status" value="ALT_INIT"/>
    <property type="molecule type" value="Genomic_DNA"/>
</dbReference>
<dbReference type="EMBL" id="BA000007">
    <property type="protein sequence ID" value="BAB37939.1"/>
    <property type="status" value="ALT_INIT"/>
    <property type="molecule type" value="Genomic_DNA"/>
</dbReference>
<dbReference type="PIR" id="C65165">
    <property type="entry name" value="C65165"/>
</dbReference>
<dbReference type="PIR" id="D91193">
    <property type="entry name" value="D91193"/>
</dbReference>
<dbReference type="PIR" id="E86040">
    <property type="entry name" value="E86040"/>
</dbReference>
<dbReference type="RefSeq" id="NP_312543.2">
    <property type="nucleotide sequence ID" value="NC_002695.1"/>
</dbReference>
<dbReference type="RefSeq" id="WP_000818601.1">
    <property type="nucleotide sequence ID" value="NZ_VOAI01000021.1"/>
</dbReference>
<dbReference type="SMR" id="Q8X580"/>
<dbReference type="STRING" id="155864.Z5065"/>
<dbReference type="GeneID" id="915529"/>
<dbReference type="GeneID" id="93778356"/>
<dbReference type="KEGG" id="ece:Z5065"/>
<dbReference type="KEGG" id="ecs:ECs_4516"/>
<dbReference type="PATRIC" id="fig|386585.9.peg.4732"/>
<dbReference type="eggNOG" id="COG1309">
    <property type="taxonomic scope" value="Bacteria"/>
</dbReference>
<dbReference type="HOGENOM" id="CLU_069356_5_0_6"/>
<dbReference type="OMA" id="KMYEGLI"/>
<dbReference type="Proteomes" id="UP000000558">
    <property type="component" value="Chromosome"/>
</dbReference>
<dbReference type="Proteomes" id="UP000002519">
    <property type="component" value="Chromosome"/>
</dbReference>
<dbReference type="GO" id="GO:0043590">
    <property type="term" value="C:bacterial nucleoid"/>
    <property type="evidence" value="ECO:0007669"/>
    <property type="project" value="UniProtKB-UniRule"/>
</dbReference>
<dbReference type="GO" id="GO:0005737">
    <property type="term" value="C:cytoplasm"/>
    <property type="evidence" value="ECO:0007669"/>
    <property type="project" value="UniProtKB-UniRule"/>
</dbReference>
<dbReference type="GO" id="GO:0003700">
    <property type="term" value="F:DNA-binding transcription factor activity"/>
    <property type="evidence" value="ECO:0007669"/>
    <property type="project" value="TreeGrafter"/>
</dbReference>
<dbReference type="GO" id="GO:0000976">
    <property type="term" value="F:transcription cis-regulatory region binding"/>
    <property type="evidence" value="ECO:0007669"/>
    <property type="project" value="TreeGrafter"/>
</dbReference>
<dbReference type="GO" id="GO:0051301">
    <property type="term" value="P:cell division"/>
    <property type="evidence" value="ECO:0007669"/>
    <property type="project" value="UniProtKB-KW"/>
</dbReference>
<dbReference type="GO" id="GO:0010974">
    <property type="term" value="P:negative regulation of division septum assembly"/>
    <property type="evidence" value="ECO:0007669"/>
    <property type="project" value="InterPro"/>
</dbReference>
<dbReference type="FunFam" id="1.10.357.10:FF:000002">
    <property type="entry name" value="Nucleoid occlusion factor SlmA"/>
    <property type="match status" value="1"/>
</dbReference>
<dbReference type="Gene3D" id="1.10.357.10">
    <property type="entry name" value="Tetracycline Repressor, domain 2"/>
    <property type="match status" value="1"/>
</dbReference>
<dbReference type="HAMAP" id="MF_01839">
    <property type="entry name" value="NO_factor_SlmA"/>
    <property type="match status" value="1"/>
</dbReference>
<dbReference type="InterPro" id="IPR023772">
    <property type="entry name" value="DNA-bd_HTH_TetR-type_CS"/>
</dbReference>
<dbReference type="InterPro" id="IPR009057">
    <property type="entry name" value="Homeodomain-like_sf"/>
</dbReference>
<dbReference type="InterPro" id="IPR050109">
    <property type="entry name" value="HTH-type_TetR-like_transc_reg"/>
</dbReference>
<dbReference type="InterPro" id="IPR001647">
    <property type="entry name" value="HTH_TetR"/>
</dbReference>
<dbReference type="InterPro" id="IPR023769">
    <property type="entry name" value="NO_SlmA"/>
</dbReference>
<dbReference type="InterPro" id="IPR054580">
    <property type="entry name" value="SlmA-like_C"/>
</dbReference>
<dbReference type="InterPro" id="IPR036271">
    <property type="entry name" value="Tet_transcr_reg_TetR-rel_C_sf"/>
</dbReference>
<dbReference type="NCBIfam" id="NF007015">
    <property type="entry name" value="PRK09480.1"/>
    <property type="match status" value="1"/>
</dbReference>
<dbReference type="PANTHER" id="PTHR30055">
    <property type="entry name" value="HTH-TYPE TRANSCRIPTIONAL REGULATOR RUTR"/>
    <property type="match status" value="1"/>
</dbReference>
<dbReference type="PANTHER" id="PTHR30055:SF183">
    <property type="entry name" value="NUCLEOID OCCLUSION FACTOR SLMA"/>
    <property type="match status" value="1"/>
</dbReference>
<dbReference type="Pfam" id="PF22276">
    <property type="entry name" value="SlmA-like_C"/>
    <property type="match status" value="1"/>
</dbReference>
<dbReference type="Pfam" id="PF00440">
    <property type="entry name" value="TetR_N"/>
    <property type="match status" value="1"/>
</dbReference>
<dbReference type="SUPFAM" id="SSF46689">
    <property type="entry name" value="Homeodomain-like"/>
    <property type="match status" value="1"/>
</dbReference>
<dbReference type="SUPFAM" id="SSF48498">
    <property type="entry name" value="Tetracyclin repressor-like, C-terminal domain"/>
    <property type="match status" value="1"/>
</dbReference>
<dbReference type="PROSITE" id="PS01081">
    <property type="entry name" value="HTH_TETR_1"/>
    <property type="match status" value="1"/>
</dbReference>
<dbReference type="PROSITE" id="PS50977">
    <property type="entry name" value="HTH_TETR_2"/>
    <property type="match status" value="1"/>
</dbReference>
<name>SLMA_ECO57</name>
<gene>
    <name evidence="1" type="primary">slmA</name>
    <name type="ordered locus">Z5065</name>
    <name type="ordered locus">ECs4516</name>
</gene>
<reference key="1">
    <citation type="journal article" date="2001" name="Nature">
        <title>Genome sequence of enterohaemorrhagic Escherichia coli O157:H7.</title>
        <authorList>
            <person name="Perna N.T."/>
            <person name="Plunkett G. III"/>
            <person name="Burland V."/>
            <person name="Mau B."/>
            <person name="Glasner J.D."/>
            <person name="Rose D.J."/>
            <person name="Mayhew G.F."/>
            <person name="Evans P.S."/>
            <person name="Gregor J."/>
            <person name="Kirkpatrick H.A."/>
            <person name="Posfai G."/>
            <person name="Hackett J."/>
            <person name="Klink S."/>
            <person name="Boutin A."/>
            <person name="Shao Y."/>
            <person name="Miller L."/>
            <person name="Grotbeck E.J."/>
            <person name="Davis N.W."/>
            <person name="Lim A."/>
            <person name="Dimalanta E.T."/>
            <person name="Potamousis K."/>
            <person name="Apodaca J."/>
            <person name="Anantharaman T.S."/>
            <person name="Lin J."/>
            <person name="Yen G."/>
            <person name="Schwartz D.C."/>
            <person name="Welch R.A."/>
            <person name="Blattner F.R."/>
        </authorList>
    </citation>
    <scope>NUCLEOTIDE SEQUENCE [LARGE SCALE GENOMIC DNA]</scope>
    <source>
        <strain>O157:H7 / EDL933 / ATCC 700927 / EHEC</strain>
    </source>
</reference>
<reference key="2">
    <citation type="journal article" date="2001" name="DNA Res.">
        <title>Complete genome sequence of enterohemorrhagic Escherichia coli O157:H7 and genomic comparison with a laboratory strain K-12.</title>
        <authorList>
            <person name="Hayashi T."/>
            <person name="Makino K."/>
            <person name="Ohnishi M."/>
            <person name="Kurokawa K."/>
            <person name="Ishii K."/>
            <person name="Yokoyama K."/>
            <person name="Han C.-G."/>
            <person name="Ohtsubo E."/>
            <person name="Nakayama K."/>
            <person name="Murata T."/>
            <person name="Tanaka M."/>
            <person name="Tobe T."/>
            <person name="Iida T."/>
            <person name="Takami H."/>
            <person name="Honda T."/>
            <person name="Sasakawa C."/>
            <person name="Ogasawara N."/>
            <person name="Yasunaga T."/>
            <person name="Kuhara S."/>
            <person name="Shiba T."/>
            <person name="Hattori M."/>
            <person name="Shinagawa H."/>
        </authorList>
    </citation>
    <scope>NUCLEOTIDE SEQUENCE [LARGE SCALE GENOMIC DNA]</scope>
    <source>
        <strain>O157:H7 / Sakai / RIMD 0509952 / EHEC</strain>
    </source>
</reference>
<protein>
    <recommendedName>
        <fullName evidence="1">Nucleoid occlusion factor SlmA</fullName>
    </recommendedName>
</protein>